<keyword id="KW-0002">3D-structure</keyword>
<keyword id="KW-0007">Acetylation</keyword>
<keyword id="KW-0025">Alternative splicing</keyword>
<keyword id="KW-0175">Coiled coil</keyword>
<keyword id="KW-0912">Congenital muscular dystrophy</keyword>
<keyword id="KW-0903">Direct protein sequencing</keyword>
<keyword id="KW-0225">Disease variant</keyword>
<keyword id="KW-0256">Endoplasmic reticulum</keyword>
<keyword id="KW-0887">Epilepsy</keyword>
<keyword id="KW-0333">Golgi apparatus</keyword>
<keyword id="KW-0472">Membrane</keyword>
<keyword id="KW-0523">Neurodegeneration</keyword>
<keyword id="KW-0653">Protein transport</keyword>
<keyword id="KW-1267">Proteomics identification</keyword>
<keyword id="KW-1185">Reference proteome</keyword>
<keyword id="KW-0812">Transmembrane</keyword>
<keyword id="KW-1133">Transmembrane helix</keyword>
<keyword id="KW-0813">Transport</keyword>
<proteinExistence type="evidence at protein level"/>
<name>GOSR2_HUMAN</name>
<accession>O14653</accession>
<accession>D3DXJ5</accession>
<accession>D3DXJ6</accession>
<accession>Q8N4B8</accession>
<accession>Q96DA5</accession>
<accession>Q9BZZ4</accession>
<organism>
    <name type="scientific">Homo sapiens</name>
    <name type="common">Human</name>
    <dbReference type="NCBI Taxonomy" id="9606"/>
    <lineage>
        <taxon>Eukaryota</taxon>
        <taxon>Metazoa</taxon>
        <taxon>Chordata</taxon>
        <taxon>Craniata</taxon>
        <taxon>Vertebrata</taxon>
        <taxon>Euteleostomi</taxon>
        <taxon>Mammalia</taxon>
        <taxon>Eutheria</taxon>
        <taxon>Euarchontoglires</taxon>
        <taxon>Primates</taxon>
        <taxon>Haplorrhini</taxon>
        <taxon>Catarrhini</taxon>
        <taxon>Hominidae</taxon>
        <taxon>Homo</taxon>
    </lineage>
</organism>
<dbReference type="EMBL" id="AF007548">
    <property type="protein sequence ID" value="AAB82651.1"/>
    <property type="molecule type" value="mRNA"/>
</dbReference>
<dbReference type="EMBL" id="AF229796">
    <property type="protein sequence ID" value="AAK01855.1"/>
    <property type="molecule type" value="mRNA"/>
</dbReference>
<dbReference type="EMBL" id="AK290890">
    <property type="protein sequence ID" value="BAF83579.1"/>
    <property type="molecule type" value="mRNA"/>
</dbReference>
<dbReference type="EMBL" id="AC005670">
    <property type="status" value="NOT_ANNOTATED_CDS"/>
    <property type="molecule type" value="Genomic_DNA"/>
</dbReference>
<dbReference type="EMBL" id="CH471231">
    <property type="protein sequence ID" value="EAW57694.1"/>
    <property type="molecule type" value="Genomic_DNA"/>
</dbReference>
<dbReference type="EMBL" id="CH471231">
    <property type="protein sequence ID" value="EAW57695.1"/>
    <property type="molecule type" value="Genomic_DNA"/>
</dbReference>
<dbReference type="EMBL" id="CH471231">
    <property type="protein sequence ID" value="EAW57699.1"/>
    <property type="molecule type" value="Genomic_DNA"/>
</dbReference>
<dbReference type="EMBL" id="CH471231">
    <property type="protein sequence ID" value="EAW57700.1"/>
    <property type="molecule type" value="Genomic_DNA"/>
</dbReference>
<dbReference type="EMBL" id="BC034762">
    <property type="protein sequence ID" value="AAH34762.1"/>
    <property type="molecule type" value="mRNA"/>
</dbReference>
<dbReference type="EMBL" id="BC009710">
    <property type="protein sequence ID" value="AAH09710.1"/>
    <property type="molecule type" value="mRNA"/>
</dbReference>
<dbReference type="CCDS" id="CCDS11507.1">
    <molecule id="O14653-2"/>
</dbReference>
<dbReference type="CCDS" id="CCDS42355.1">
    <molecule id="O14653-1"/>
</dbReference>
<dbReference type="CCDS" id="CCDS45719.1">
    <molecule id="O14653-3"/>
</dbReference>
<dbReference type="RefSeq" id="NP_001012529.1">
    <molecule id="O14653-3"/>
    <property type="nucleotide sequence ID" value="NM_001012511.3"/>
</dbReference>
<dbReference type="RefSeq" id="NP_004278.2">
    <molecule id="O14653-1"/>
    <property type="nucleotide sequence ID" value="NM_004287.4"/>
</dbReference>
<dbReference type="RefSeq" id="NP_473363.1">
    <molecule id="O14653-2"/>
    <property type="nucleotide sequence ID" value="NM_054022.4"/>
</dbReference>
<dbReference type="PDB" id="3EG9">
    <property type="method" value="X-ray"/>
    <property type="resolution" value="3.00 A"/>
    <property type="chains" value="C=116-121"/>
</dbReference>
<dbReference type="PDBsum" id="3EG9"/>
<dbReference type="SMR" id="O14653"/>
<dbReference type="BioGRID" id="114940">
    <property type="interactions" value="143"/>
</dbReference>
<dbReference type="FunCoup" id="O14653">
    <property type="interactions" value="3936"/>
</dbReference>
<dbReference type="IntAct" id="O14653">
    <property type="interactions" value="90"/>
</dbReference>
<dbReference type="MINT" id="O14653"/>
<dbReference type="STRING" id="9606.ENSP00000461784"/>
<dbReference type="iPTMnet" id="O14653"/>
<dbReference type="PhosphoSitePlus" id="O14653"/>
<dbReference type="SwissPalm" id="O14653"/>
<dbReference type="BioMuta" id="GOSR2"/>
<dbReference type="jPOST" id="O14653"/>
<dbReference type="MassIVE" id="O14653"/>
<dbReference type="PaxDb" id="9606-ENSP00000225567"/>
<dbReference type="PeptideAtlas" id="O14653"/>
<dbReference type="ProteomicsDB" id="48148">
    <molecule id="O14653-1"/>
</dbReference>
<dbReference type="ProteomicsDB" id="48149">
    <molecule id="O14653-2"/>
</dbReference>
<dbReference type="ProteomicsDB" id="48150">
    <molecule id="O14653-3"/>
</dbReference>
<dbReference type="Pumba" id="O14653"/>
<dbReference type="Antibodypedia" id="3382">
    <property type="antibodies" value="145 antibodies from 25 providers"/>
</dbReference>
<dbReference type="DNASU" id="9570"/>
<dbReference type="Ensembl" id="ENST00000225567.9">
    <molecule id="O14653-2"/>
    <property type="protein sequence ID" value="ENSP00000225567.4"/>
    <property type="gene ID" value="ENSG00000108433.17"/>
</dbReference>
<dbReference type="Ensembl" id="ENST00000640051.2">
    <molecule id="O14653-1"/>
    <property type="protein sequence ID" value="ENSP00000492751.1"/>
    <property type="gene ID" value="ENSG00000108433.17"/>
</dbReference>
<dbReference type="Ensembl" id="ENST00000640621.1">
    <molecule id="O14653-3"/>
    <property type="protein sequence ID" value="ENSP00000492830.1"/>
    <property type="gene ID" value="ENSG00000108433.17"/>
</dbReference>
<dbReference type="GeneID" id="9570"/>
<dbReference type="KEGG" id="hsa:9570"/>
<dbReference type="MANE-Select" id="ENST00000640051.2">
    <property type="protein sequence ID" value="ENSP00000492751.1"/>
    <property type="RefSeq nucleotide sequence ID" value="NM_004287.5"/>
    <property type="RefSeq protein sequence ID" value="NP_004278.2"/>
</dbReference>
<dbReference type="UCSC" id="uc002iky.4">
    <molecule id="O14653-1"/>
    <property type="organism name" value="human"/>
</dbReference>
<dbReference type="AGR" id="HGNC:4431"/>
<dbReference type="CTD" id="9570"/>
<dbReference type="DisGeNET" id="9570"/>
<dbReference type="GeneCards" id="GOSR2"/>
<dbReference type="HGNC" id="HGNC:4431">
    <property type="gene designation" value="GOSR2"/>
</dbReference>
<dbReference type="HPA" id="ENSG00000108433">
    <property type="expression patterns" value="Low tissue specificity"/>
</dbReference>
<dbReference type="MalaCards" id="GOSR2"/>
<dbReference type="MIM" id="604027">
    <property type="type" value="gene"/>
</dbReference>
<dbReference type="MIM" id="614018">
    <property type="type" value="phenotype"/>
</dbReference>
<dbReference type="MIM" id="620166">
    <property type="type" value="phenotype"/>
</dbReference>
<dbReference type="neXtProt" id="NX_O14653"/>
<dbReference type="OpenTargets" id="ENSG00000108433"/>
<dbReference type="Orphanet" id="280620">
    <property type="disease" value="Progressive myoclonic epilepsy type 6"/>
</dbReference>
<dbReference type="PharmGKB" id="PA28816"/>
<dbReference type="VEuPathDB" id="HostDB:ENSG00000108433"/>
<dbReference type="eggNOG" id="KOG3251">
    <property type="taxonomic scope" value="Eukaryota"/>
</dbReference>
<dbReference type="GeneTree" id="ENSGT00950000183192"/>
<dbReference type="InParanoid" id="O14653"/>
<dbReference type="OMA" id="LKYDSRH"/>
<dbReference type="OrthoDB" id="158360at2759"/>
<dbReference type="PAN-GO" id="O14653">
    <property type="GO annotations" value="9 GO annotations based on evolutionary models"/>
</dbReference>
<dbReference type="PhylomeDB" id="O14653"/>
<dbReference type="TreeFam" id="TF313702"/>
<dbReference type="PathwayCommons" id="O14653"/>
<dbReference type="Reactome" id="R-HSA-204005">
    <property type="pathway name" value="COPII-mediated vesicle transport"/>
</dbReference>
<dbReference type="Reactome" id="R-HSA-381038">
    <property type="pathway name" value="XBP1(S) activates chaperone genes"/>
</dbReference>
<dbReference type="Reactome" id="R-HSA-5694530">
    <property type="pathway name" value="Cargo concentration in the ER"/>
</dbReference>
<dbReference type="Reactome" id="R-HSA-6807878">
    <property type="pathway name" value="COPI-mediated anterograde transport"/>
</dbReference>
<dbReference type="Reactome" id="R-HSA-6811438">
    <property type="pathway name" value="Intra-Golgi traffic"/>
</dbReference>
<dbReference type="SignaLink" id="O14653"/>
<dbReference type="BioGRID-ORCS" id="9570">
    <property type="hits" value="709 hits in 1161 CRISPR screens"/>
</dbReference>
<dbReference type="ChiTaRS" id="GOSR2">
    <property type="organism name" value="human"/>
</dbReference>
<dbReference type="EvolutionaryTrace" id="O14653"/>
<dbReference type="GeneWiki" id="GOSR2"/>
<dbReference type="GenomeRNAi" id="9570"/>
<dbReference type="Pharos" id="O14653">
    <property type="development level" value="Tbio"/>
</dbReference>
<dbReference type="PRO" id="PR:O14653"/>
<dbReference type="Proteomes" id="UP000005640">
    <property type="component" value="Chromosome 17"/>
</dbReference>
<dbReference type="RNAct" id="O14653">
    <property type="molecule type" value="protein"/>
</dbReference>
<dbReference type="Bgee" id="ENSG00000108433">
    <property type="expression patterns" value="Expressed in buccal mucosa cell and 202 other cell types or tissues"/>
</dbReference>
<dbReference type="ExpressionAtlas" id="O14653">
    <property type="expression patterns" value="baseline and differential"/>
</dbReference>
<dbReference type="GO" id="GO:0005829">
    <property type="term" value="C:cytosol"/>
    <property type="evidence" value="ECO:0000314"/>
    <property type="project" value="HPA"/>
</dbReference>
<dbReference type="GO" id="GO:0005789">
    <property type="term" value="C:endoplasmic reticulum membrane"/>
    <property type="evidence" value="ECO:0000318"/>
    <property type="project" value="GO_Central"/>
</dbReference>
<dbReference type="GO" id="GO:0033116">
    <property type="term" value="C:endoplasmic reticulum-Golgi intermediate compartment membrane"/>
    <property type="evidence" value="ECO:0000304"/>
    <property type="project" value="Reactome"/>
</dbReference>
<dbReference type="GO" id="GO:0012507">
    <property type="term" value="C:ER to Golgi transport vesicle membrane"/>
    <property type="evidence" value="ECO:0000318"/>
    <property type="project" value="GO_Central"/>
</dbReference>
<dbReference type="GO" id="GO:0005794">
    <property type="term" value="C:Golgi apparatus"/>
    <property type="evidence" value="ECO:0000314"/>
    <property type="project" value="HPA"/>
</dbReference>
<dbReference type="GO" id="GO:0000139">
    <property type="term" value="C:Golgi membrane"/>
    <property type="evidence" value="ECO:0000314"/>
    <property type="project" value="UniProtKB"/>
</dbReference>
<dbReference type="GO" id="GO:0031902">
    <property type="term" value="C:late endosome membrane"/>
    <property type="evidence" value="ECO:0000318"/>
    <property type="project" value="GO_Central"/>
</dbReference>
<dbReference type="GO" id="GO:0016020">
    <property type="term" value="C:membrane"/>
    <property type="evidence" value="ECO:0007005"/>
    <property type="project" value="UniProtKB"/>
</dbReference>
<dbReference type="GO" id="GO:0005654">
    <property type="term" value="C:nucleoplasm"/>
    <property type="evidence" value="ECO:0000314"/>
    <property type="project" value="HPA"/>
</dbReference>
<dbReference type="GO" id="GO:0031201">
    <property type="term" value="C:SNARE complex"/>
    <property type="evidence" value="ECO:0000250"/>
    <property type="project" value="UniProtKB"/>
</dbReference>
<dbReference type="GO" id="GO:0005484">
    <property type="term" value="F:SNAP receptor activity"/>
    <property type="evidence" value="ECO:0000318"/>
    <property type="project" value="GO_Central"/>
</dbReference>
<dbReference type="GO" id="GO:0000149">
    <property type="term" value="F:SNARE binding"/>
    <property type="evidence" value="ECO:0000318"/>
    <property type="project" value="GO_Central"/>
</dbReference>
<dbReference type="GO" id="GO:0006891">
    <property type="term" value="P:intra-Golgi vesicle-mediated transport"/>
    <property type="evidence" value="ECO:0000314"/>
    <property type="project" value="UniProtKB"/>
</dbReference>
<dbReference type="GO" id="GO:0015031">
    <property type="term" value="P:protein transport"/>
    <property type="evidence" value="ECO:0007669"/>
    <property type="project" value="UniProtKB-KW"/>
</dbReference>
<dbReference type="GO" id="GO:0006906">
    <property type="term" value="P:vesicle fusion"/>
    <property type="evidence" value="ECO:0000318"/>
    <property type="project" value="GO_Central"/>
</dbReference>
<dbReference type="CDD" id="cd15863">
    <property type="entry name" value="SNARE_GS27"/>
    <property type="match status" value="1"/>
</dbReference>
<dbReference type="FunFam" id="1.20.5.110:FF:000044">
    <property type="entry name" value="Golgi SNAP receptor complex member 2"/>
    <property type="match status" value="1"/>
</dbReference>
<dbReference type="FunFam" id="1.20.58.400:FF:000004">
    <property type="entry name" value="Golgi SNAP receptor complex member 2 isoform X1"/>
    <property type="match status" value="1"/>
</dbReference>
<dbReference type="Gene3D" id="1.20.58.400">
    <property type="entry name" value="t-snare proteins"/>
    <property type="match status" value="1"/>
</dbReference>
<dbReference type="InterPro" id="IPR027027">
    <property type="entry name" value="GOSR2/Membrin/Bos1"/>
</dbReference>
<dbReference type="InterPro" id="IPR010989">
    <property type="entry name" value="SNARE"/>
</dbReference>
<dbReference type="InterPro" id="IPR038407">
    <property type="entry name" value="v-SNARE_N_sf"/>
</dbReference>
<dbReference type="PANTHER" id="PTHR21230:SF1">
    <property type="entry name" value="GOLGI SNAP RECEPTOR COMPLEX MEMBER 2"/>
    <property type="match status" value="1"/>
</dbReference>
<dbReference type="PANTHER" id="PTHR21230">
    <property type="entry name" value="VESICLE TRANSPORT V-SNARE PROTEIN VTI1-RELATED"/>
    <property type="match status" value="1"/>
</dbReference>
<dbReference type="Pfam" id="PF12352">
    <property type="entry name" value="V-SNARE_C"/>
    <property type="match status" value="1"/>
</dbReference>
<dbReference type="PIRSF" id="PIRSF028865">
    <property type="entry name" value="Membrin-2"/>
    <property type="match status" value="1"/>
</dbReference>
<dbReference type="SUPFAM" id="SSF58038">
    <property type="entry name" value="SNARE fusion complex"/>
    <property type="match status" value="1"/>
</dbReference>
<dbReference type="SUPFAM" id="SSF47661">
    <property type="entry name" value="t-snare proteins"/>
    <property type="match status" value="1"/>
</dbReference>
<reference key="1">
    <citation type="journal article" date="1997" name="Nature">
        <title>A SNARE involved in protein transport through the Golgi apparatus.</title>
        <authorList>
            <person name="Lowe S.L."/>
            <person name="Peter F."/>
            <person name="Subramaniam V.N."/>
            <person name="Wong S.H."/>
            <person name="Hong W."/>
        </authorList>
    </citation>
    <scope>NUCLEOTIDE SEQUENCE [MRNA] (ISOFORM A)</scope>
    <scope>FUNCTION</scope>
    <scope>SUBCELLULAR LOCATION</scope>
</reference>
<reference key="2">
    <citation type="journal article" date="1999" name="Genomics">
        <title>cDNA characterization and chromosomal mapping of human Golgi SNARE GS27 and GS28 to chromosome 17.</title>
        <authorList>
            <person name="Bui T.D."/>
            <person name="Levy E.R."/>
            <person name="Subramaniam V.N."/>
            <person name="Lowe S.L."/>
            <person name="Hong W."/>
        </authorList>
    </citation>
    <scope>NUCLEOTIDE SEQUENCE [MRNA] (ISOFORM A)</scope>
</reference>
<reference key="3">
    <citation type="submission" date="2000-01" db="EMBL/GenBank/DDBJ databases">
        <title>Gene organization of human Golgi SNARE GS27.</title>
        <authorList>
            <person name="Bui T.D."/>
            <person name="Hong W."/>
        </authorList>
    </citation>
    <scope>NUCLEOTIDE SEQUENCE [MRNA] (ISOFORM B)</scope>
</reference>
<reference key="4">
    <citation type="journal article" date="2004" name="Nat. Genet.">
        <title>Complete sequencing and characterization of 21,243 full-length human cDNAs.</title>
        <authorList>
            <person name="Ota T."/>
            <person name="Suzuki Y."/>
            <person name="Nishikawa T."/>
            <person name="Otsuki T."/>
            <person name="Sugiyama T."/>
            <person name="Irie R."/>
            <person name="Wakamatsu A."/>
            <person name="Hayashi K."/>
            <person name="Sato H."/>
            <person name="Nagai K."/>
            <person name="Kimura K."/>
            <person name="Makita H."/>
            <person name="Sekine M."/>
            <person name="Obayashi M."/>
            <person name="Nishi T."/>
            <person name="Shibahara T."/>
            <person name="Tanaka T."/>
            <person name="Ishii S."/>
            <person name="Yamamoto J."/>
            <person name="Saito K."/>
            <person name="Kawai Y."/>
            <person name="Isono Y."/>
            <person name="Nakamura Y."/>
            <person name="Nagahari K."/>
            <person name="Murakami K."/>
            <person name="Yasuda T."/>
            <person name="Iwayanagi T."/>
            <person name="Wagatsuma M."/>
            <person name="Shiratori A."/>
            <person name="Sudo H."/>
            <person name="Hosoiri T."/>
            <person name="Kaku Y."/>
            <person name="Kodaira H."/>
            <person name="Kondo H."/>
            <person name="Sugawara M."/>
            <person name="Takahashi M."/>
            <person name="Kanda K."/>
            <person name="Yokoi T."/>
            <person name="Furuya T."/>
            <person name="Kikkawa E."/>
            <person name="Omura Y."/>
            <person name="Abe K."/>
            <person name="Kamihara K."/>
            <person name="Katsuta N."/>
            <person name="Sato K."/>
            <person name="Tanikawa M."/>
            <person name="Yamazaki M."/>
            <person name="Ninomiya K."/>
            <person name="Ishibashi T."/>
            <person name="Yamashita H."/>
            <person name="Murakawa K."/>
            <person name="Fujimori K."/>
            <person name="Tanai H."/>
            <person name="Kimata M."/>
            <person name="Watanabe M."/>
            <person name="Hiraoka S."/>
            <person name="Chiba Y."/>
            <person name="Ishida S."/>
            <person name="Ono Y."/>
            <person name="Takiguchi S."/>
            <person name="Watanabe S."/>
            <person name="Yosida M."/>
            <person name="Hotuta T."/>
            <person name="Kusano J."/>
            <person name="Kanehori K."/>
            <person name="Takahashi-Fujii A."/>
            <person name="Hara H."/>
            <person name="Tanase T.-O."/>
            <person name="Nomura Y."/>
            <person name="Togiya S."/>
            <person name="Komai F."/>
            <person name="Hara R."/>
            <person name="Takeuchi K."/>
            <person name="Arita M."/>
            <person name="Imose N."/>
            <person name="Musashino K."/>
            <person name="Yuuki H."/>
            <person name="Oshima A."/>
            <person name="Sasaki N."/>
            <person name="Aotsuka S."/>
            <person name="Yoshikawa Y."/>
            <person name="Matsunawa H."/>
            <person name="Ichihara T."/>
            <person name="Shiohata N."/>
            <person name="Sano S."/>
            <person name="Moriya S."/>
            <person name="Momiyama H."/>
            <person name="Satoh N."/>
            <person name="Takami S."/>
            <person name="Terashima Y."/>
            <person name="Suzuki O."/>
            <person name="Nakagawa S."/>
            <person name="Senoh A."/>
            <person name="Mizoguchi H."/>
            <person name="Goto Y."/>
            <person name="Shimizu F."/>
            <person name="Wakebe H."/>
            <person name="Hishigaki H."/>
            <person name="Watanabe T."/>
            <person name="Sugiyama A."/>
            <person name="Takemoto M."/>
            <person name="Kawakami B."/>
            <person name="Yamazaki M."/>
            <person name="Watanabe K."/>
            <person name="Kumagai A."/>
            <person name="Itakura S."/>
            <person name="Fukuzumi Y."/>
            <person name="Fujimori Y."/>
            <person name="Komiyama M."/>
            <person name="Tashiro H."/>
            <person name="Tanigami A."/>
            <person name="Fujiwara T."/>
            <person name="Ono T."/>
            <person name="Yamada K."/>
            <person name="Fujii Y."/>
            <person name="Ozaki K."/>
            <person name="Hirao M."/>
            <person name="Ohmori Y."/>
            <person name="Kawabata A."/>
            <person name="Hikiji T."/>
            <person name="Kobatake N."/>
            <person name="Inagaki H."/>
            <person name="Ikema Y."/>
            <person name="Okamoto S."/>
            <person name="Okitani R."/>
            <person name="Kawakami T."/>
            <person name="Noguchi S."/>
            <person name="Itoh T."/>
            <person name="Shigeta K."/>
            <person name="Senba T."/>
            <person name="Matsumura K."/>
            <person name="Nakajima Y."/>
            <person name="Mizuno T."/>
            <person name="Morinaga M."/>
            <person name="Sasaki M."/>
            <person name="Togashi T."/>
            <person name="Oyama M."/>
            <person name="Hata H."/>
            <person name="Watanabe M."/>
            <person name="Komatsu T."/>
            <person name="Mizushima-Sugano J."/>
            <person name="Satoh T."/>
            <person name="Shirai Y."/>
            <person name="Takahashi Y."/>
            <person name="Nakagawa K."/>
            <person name="Okumura K."/>
            <person name="Nagase T."/>
            <person name="Nomura N."/>
            <person name="Kikuchi H."/>
            <person name="Masuho Y."/>
            <person name="Yamashita R."/>
            <person name="Nakai K."/>
            <person name="Yada T."/>
            <person name="Nakamura Y."/>
            <person name="Ohara O."/>
            <person name="Isogai T."/>
            <person name="Sugano S."/>
        </authorList>
    </citation>
    <scope>NUCLEOTIDE SEQUENCE [LARGE SCALE MRNA] (ISOFORM 3)</scope>
</reference>
<reference key="5">
    <citation type="journal article" date="2006" name="Nature">
        <title>DNA sequence of human chromosome 17 and analysis of rearrangement in the human lineage.</title>
        <authorList>
            <person name="Zody M.C."/>
            <person name="Garber M."/>
            <person name="Adams D.J."/>
            <person name="Sharpe T."/>
            <person name="Harrow J."/>
            <person name="Lupski J.R."/>
            <person name="Nicholson C."/>
            <person name="Searle S.M."/>
            <person name="Wilming L."/>
            <person name="Young S.K."/>
            <person name="Abouelleil A."/>
            <person name="Allen N.R."/>
            <person name="Bi W."/>
            <person name="Bloom T."/>
            <person name="Borowsky M.L."/>
            <person name="Bugalter B.E."/>
            <person name="Butler J."/>
            <person name="Chang J.L."/>
            <person name="Chen C.-K."/>
            <person name="Cook A."/>
            <person name="Corum B."/>
            <person name="Cuomo C.A."/>
            <person name="de Jong P.J."/>
            <person name="DeCaprio D."/>
            <person name="Dewar K."/>
            <person name="FitzGerald M."/>
            <person name="Gilbert J."/>
            <person name="Gibson R."/>
            <person name="Gnerre S."/>
            <person name="Goldstein S."/>
            <person name="Grafham D.V."/>
            <person name="Grocock R."/>
            <person name="Hafez N."/>
            <person name="Hagopian D.S."/>
            <person name="Hart E."/>
            <person name="Norman C.H."/>
            <person name="Humphray S."/>
            <person name="Jaffe D.B."/>
            <person name="Jones M."/>
            <person name="Kamal M."/>
            <person name="Khodiyar V.K."/>
            <person name="LaButti K."/>
            <person name="Laird G."/>
            <person name="Lehoczky J."/>
            <person name="Liu X."/>
            <person name="Lokyitsang T."/>
            <person name="Loveland J."/>
            <person name="Lui A."/>
            <person name="Macdonald P."/>
            <person name="Major J.E."/>
            <person name="Matthews L."/>
            <person name="Mauceli E."/>
            <person name="McCarroll S.A."/>
            <person name="Mihalev A.H."/>
            <person name="Mudge J."/>
            <person name="Nguyen C."/>
            <person name="Nicol R."/>
            <person name="O'Leary S.B."/>
            <person name="Osoegawa K."/>
            <person name="Schwartz D.C."/>
            <person name="Shaw-Smith C."/>
            <person name="Stankiewicz P."/>
            <person name="Steward C."/>
            <person name="Swarbreck D."/>
            <person name="Venkataraman V."/>
            <person name="Whittaker C.A."/>
            <person name="Yang X."/>
            <person name="Zimmer A.R."/>
            <person name="Bradley A."/>
            <person name="Hubbard T."/>
            <person name="Birren B.W."/>
            <person name="Rogers J."/>
            <person name="Lander E.S."/>
            <person name="Nusbaum C."/>
        </authorList>
    </citation>
    <scope>NUCLEOTIDE SEQUENCE [LARGE SCALE GENOMIC DNA]</scope>
</reference>
<reference key="6">
    <citation type="submission" date="2005-09" db="EMBL/GenBank/DDBJ databases">
        <authorList>
            <person name="Mural R.J."/>
            <person name="Istrail S."/>
            <person name="Sutton G.G."/>
            <person name="Florea L."/>
            <person name="Halpern A.L."/>
            <person name="Mobarry C.M."/>
            <person name="Lippert R."/>
            <person name="Walenz B."/>
            <person name="Shatkay H."/>
            <person name="Dew I."/>
            <person name="Miller J.R."/>
            <person name="Flanigan M.J."/>
            <person name="Edwards N.J."/>
            <person name="Bolanos R."/>
            <person name="Fasulo D."/>
            <person name="Halldorsson B.V."/>
            <person name="Hannenhalli S."/>
            <person name="Turner R."/>
            <person name="Yooseph S."/>
            <person name="Lu F."/>
            <person name="Nusskern D.R."/>
            <person name="Shue B.C."/>
            <person name="Zheng X.H."/>
            <person name="Zhong F."/>
            <person name="Delcher A.L."/>
            <person name="Huson D.H."/>
            <person name="Kravitz S.A."/>
            <person name="Mouchard L."/>
            <person name="Reinert K."/>
            <person name="Remington K.A."/>
            <person name="Clark A.G."/>
            <person name="Waterman M.S."/>
            <person name="Eichler E.E."/>
            <person name="Adams M.D."/>
            <person name="Hunkapiller M.W."/>
            <person name="Myers E.W."/>
            <person name="Venter J.C."/>
        </authorList>
    </citation>
    <scope>NUCLEOTIDE SEQUENCE [LARGE SCALE GENOMIC DNA]</scope>
</reference>
<reference key="7">
    <citation type="journal article" date="2004" name="Genome Res.">
        <title>The status, quality, and expansion of the NIH full-length cDNA project: the Mammalian Gene Collection (MGC).</title>
        <authorList>
            <consortium name="The MGC Project Team"/>
        </authorList>
    </citation>
    <scope>NUCLEOTIDE SEQUENCE [LARGE SCALE MRNA] (ISOFORMS A AND 3)</scope>
    <source>
        <tissue>Colon</tissue>
        <tissue>Lung</tissue>
    </source>
</reference>
<reference key="8">
    <citation type="submission" date="2009-06" db="UniProtKB">
        <authorList>
            <person name="Bienvenut W.V."/>
            <person name="Lao L."/>
            <person name="Ryan K.M."/>
        </authorList>
    </citation>
    <scope>PROTEIN SEQUENCE OF 1-10; 51-63 AND 75-85</scope>
    <scope>ACETYLATION AT MET-1</scope>
    <scope>IDENTIFICATION BY MASS SPECTROMETRY</scope>
    <source>
        <tissue>Osteosarcoma</tissue>
    </source>
</reference>
<reference key="9">
    <citation type="journal article" date="2021" name="EMBO Mol. Med.">
        <title>BET1 variants establish impaired vesicular transport as a cause for muscular dystrophy with epilepsy.</title>
        <authorList>
            <person name="Donkervoort S."/>
            <person name="Krause N."/>
            <person name="Dergai M."/>
            <person name="Yun P."/>
            <person name="Koliwer J."/>
            <person name="Gorokhova S."/>
            <person name="Geist Hauserman J."/>
            <person name="Cummings B.B."/>
            <person name="Hu Y."/>
            <person name="Smith R."/>
            <person name="Uapinyoying P."/>
            <person name="Ganesh V.S."/>
            <person name="Ghosh P.S."/>
            <person name="Monaghan K.G."/>
            <person name="Edassery S.L."/>
            <person name="Ferle P.E."/>
            <person name="Silverstein S."/>
            <person name="Chao K.R."/>
            <person name="Snyder M."/>
            <person name="Ellingwood S."/>
            <person name="Bharucha-Goebel D."/>
            <person name="Iannaccone S.T."/>
            <person name="Dal Peraro M."/>
            <person name="Foley A.R."/>
            <person name="Savas J.N."/>
            <person name="Bolduc V."/>
            <person name="Fasshauer D."/>
            <person name="Boennemann C.G."/>
            <person name="Schwake M."/>
        </authorList>
    </citation>
    <scope>INTERACTION WITH BET1</scope>
</reference>
<reference evidence="16" key="10">
    <citation type="journal article" date="2008" name="EMBO J.">
        <title>Structural basis of cargo membrane protein discrimination by the human COPII coat machinery.</title>
        <authorList>
            <person name="Mancias J.D."/>
            <person name="Goldberg J."/>
        </authorList>
    </citation>
    <scope>X-RAY CRYSTALLOGRAPHY (3.00 ANGSTROMS) OF 116-121 IN COMPLEX WITH SEC23A AND SEC24D</scope>
    <scope>INTERACTION WITH SEC24C AND SEC24D</scope>
    <scope>MUTAGENESIS OF ILE-118 AND MET-120</scope>
    <scope>MOTIF</scope>
</reference>
<reference key="11">
    <citation type="journal article" date="2011" name="Am. J. Hum. Genet.">
        <title>A mutation in the Golgi Qb-SNARE gene GOSR2 causes progressive myoclonus epilepsy with early ataxia.</title>
        <authorList>
            <person name="Corbett M.A."/>
            <person name="Schwake M."/>
            <person name="Bahlo M."/>
            <person name="Dibbens L.M."/>
            <person name="Lin M."/>
            <person name="Gandolfo L.C."/>
            <person name="Vears D.F."/>
            <person name="O'Sullivan J.D."/>
            <person name="Robertson T."/>
            <person name="Bayly M.A."/>
            <person name="Gardner A.E."/>
            <person name="Vlaar A.M."/>
            <person name="Korenke G.C."/>
            <person name="Bloem B.R."/>
            <person name="de Coo I.F."/>
            <person name="Verhagen J.M."/>
            <person name="Lehesjoki A.E."/>
            <person name="Gecz J."/>
            <person name="Berkovic S.F."/>
        </authorList>
    </citation>
    <scope>VARIANT EPM6 TRP-144</scope>
    <scope>CHARACTERIZATION OF VARIANT EPM6 TRP-144</scope>
    <scope>SUBCELLULAR LOCATION</scope>
</reference>
<reference key="12">
    <citation type="journal article" date="2014" name="Mov. Disord.">
        <title>Ramsay Hunt syndrome: clinical characterization of progressive myoclonus ataxia caused by GOSR2 mutation.</title>
        <authorList>
            <person name="van Egmond M.E."/>
            <person name="Verschuuren-Bemelmans C.C."/>
            <person name="Nibbeling E.A."/>
            <person name="Elting J.W."/>
            <person name="Sival D.A."/>
            <person name="Brouwer O.F."/>
            <person name="de Vries J.J."/>
            <person name="Kremer H.P."/>
            <person name="Sinke R.J."/>
            <person name="Tijssen M.A."/>
            <person name="de Koning T.J."/>
        </authorList>
    </citation>
    <scope>VARIANT EPM6 TRP-144</scope>
</reference>
<reference key="13">
    <citation type="journal article" date="2018" name="Skelet. Muscle">
        <title>TRAPPC11 and GOSR2 mutations associate with hypoglycosylation of alpha-dystroglycan and muscular dystrophy.</title>
        <authorList>
            <person name="Larson A.A."/>
            <person name="Baker P.R. II"/>
            <person name="Milev M.P."/>
            <person name="Press C.A."/>
            <person name="Sokol R.J."/>
            <person name="Cox M.O."/>
            <person name="Lekostaj J.K."/>
            <person name="Stence A.A."/>
            <person name="Bossler A.D."/>
            <person name="Mueller J.M."/>
            <person name="Prematilake K."/>
            <person name="Tadjo T.F."/>
            <person name="Williams C.A."/>
            <person name="Sacher M."/>
            <person name="Moore S.A."/>
        </authorList>
    </citation>
    <scope>VARIANT MYOS TRP-144</scope>
    <scope>INVOLVEMENT IN MYOS</scope>
</reference>
<reference key="14">
    <citation type="journal article" date="2021" name="Eur. J. Med. Genet.">
        <title>Compound heterozygous variants in GOSR2 associated with congenital muscular dystrophy: A case report.</title>
        <authorList>
            <person name="Henige H."/>
            <person name="Kaur S."/>
            <person name="Pappas K."/>
        </authorList>
    </citation>
    <scope>VARIANTS MYOS 28-GLN--THR-212 DEL AND TRP-144</scope>
</reference>
<reference key="15">
    <citation type="journal article" date="2021" name="Hum. Mutat.">
        <title>Myopathy can be a key phenotype of membrin (GOSR2) deficiency.</title>
        <authorList>
            <person name="Stemmerik M.G."/>
            <person name="Borch J.S."/>
            <person name="Dunoe M."/>
            <person name="Krag T."/>
            <person name="Vissing J."/>
        </authorList>
    </citation>
    <scope>VARIANT MYOS 107-ARG--THR-212 DEL</scope>
</reference>
<sequence length="212" mass="24775">MDPLFQQTHKQVHEIQSCMGRLETADKQSVHIVENEIQASIDQIFSRLERLEILSSKEPPNKRQNARLRVDQLKYDVQHLQTALRNFQHRRHAREQQERQREELLSRTFTTNDSDTTIPMDESLQFNSSLQKVHNGMDDLILDGHNILDGLRTQRLTLKGTQKKILDIANMLGLSNTVMRLIEKRAFQDKYFMIGGMLLTCVVMFLVVQYLT</sequence>
<protein>
    <recommendedName>
        <fullName>Golgi SNAP receptor complex member 2</fullName>
    </recommendedName>
    <alternativeName>
        <fullName>27 kDa Golgi SNARE protein</fullName>
    </alternativeName>
    <alternativeName>
        <fullName>Membrin</fullName>
    </alternativeName>
</protein>
<evidence type="ECO:0000250" key="1">
    <source>
        <dbReference type="UniProtKB" id="O35165"/>
    </source>
</evidence>
<evidence type="ECO:0000255" key="2"/>
<evidence type="ECO:0000269" key="3">
    <source>
    </source>
</evidence>
<evidence type="ECO:0000269" key="4">
    <source>
    </source>
</evidence>
<evidence type="ECO:0000269" key="5">
    <source>
    </source>
</evidence>
<evidence type="ECO:0000269" key="6">
    <source>
    </source>
</evidence>
<evidence type="ECO:0000269" key="7">
    <source>
    </source>
</evidence>
<evidence type="ECO:0000269" key="8">
    <source>
    </source>
</evidence>
<evidence type="ECO:0000269" key="9">
    <source>
    </source>
</evidence>
<evidence type="ECO:0000269" key="10">
    <source>
    </source>
</evidence>
<evidence type="ECO:0000269" key="11">
    <source ref="8"/>
</evidence>
<evidence type="ECO:0000303" key="12">
    <source>
    </source>
</evidence>
<evidence type="ECO:0000303" key="13">
    <source>
    </source>
</evidence>
<evidence type="ECO:0000303" key="14">
    <source ref="3"/>
</evidence>
<evidence type="ECO:0000305" key="15"/>
<evidence type="ECO:0007744" key="16">
    <source>
        <dbReference type="PDB" id="3EG9"/>
    </source>
</evidence>
<evidence type="ECO:0007829" key="17">
    <source>
        <dbReference type="PDB" id="3EG9"/>
    </source>
</evidence>
<comment type="function">
    <text evidence="10">Involved in transport of proteins from the cis/medial-Golgi to the trans-Golgi network.</text>
</comment>
<comment type="subunit">
    <text evidence="1 3 9">Part of a unique SNARE complex composed of the Golgi SNAREs GOSR1, STX5 and YKT6 (By similarity). Interacts (via IxM motif) with SEC24C and SEC24D; mediates GOSR2 packaging into COPII-coated vesicles (PubMed:18843296). Interacts with BET1 (PubMed:34779586).</text>
</comment>
<comment type="interaction">
    <interactant intactId="EBI-4401517">
        <id>O14653</id>
    </interactant>
    <interactant intactId="EBI-13059134">
        <id>Q13520</id>
        <label>AQP6</label>
    </interactant>
    <organismsDiffer>false</organismsDiffer>
    <experiments>3</experiments>
</comment>
<comment type="interaction">
    <interactant intactId="EBI-4401517">
        <id>O14653</id>
    </interactant>
    <interactant intactId="EBI-11343438">
        <id>Q3SXY8</id>
        <label>ARL13B</label>
    </interactant>
    <organismsDiffer>false</organismsDiffer>
    <experiments>3</experiments>
</comment>
<comment type="interaction">
    <interactant intactId="EBI-4401517">
        <id>O14653</id>
    </interactant>
    <interactant intactId="EBI-749204">
        <id>O15155</id>
        <label>BET1</label>
    </interactant>
    <organismsDiffer>false</organismsDiffer>
    <experiments>8</experiments>
</comment>
<comment type="interaction">
    <interactant intactId="EBI-4401517">
        <id>O14653</id>
    </interactant>
    <interactant intactId="EBI-3895726">
        <id>P62952</id>
        <label>BLCAP</label>
    </interactant>
    <organismsDiffer>false</organismsDiffer>
    <experiments>3</experiments>
</comment>
<comment type="interaction">
    <interactant intactId="EBI-4401517">
        <id>O14653</id>
    </interactant>
    <interactant intactId="EBI-6942903">
        <id>Q96BA8</id>
        <label>CREB3L1</label>
    </interactant>
    <organismsDiffer>false</organismsDiffer>
    <experiments>5</experiments>
</comment>
<comment type="interaction">
    <interactant intactId="EBI-4401517">
        <id>O14653</id>
    </interactant>
    <interactant intactId="EBI-8646596">
        <id>P49447</id>
        <label>CYB561</label>
    </interactant>
    <organismsDiffer>false</organismsDiffer>
    <experiments>3</experiments>
</comment>
<comment type="interaction">
    <interactant intactId="EBI-4401517">
        <id>O14653</id>
    </interactant>
    <interactant intactId="EBI-8637742">
        <id>Q53TN4</id>
        <label>CYBRD1</label>
    </interactant>
    <organismsDiffer>false</organismsDiffer>
    <experiments>3</experiments>
</comment>
<comment type="interaction">
    <interactant intactId="EBI-4401517">
        <id>O14653</id>
    </interactant>
    <interactant intactId="EBI-3915253">
        <id>Q15125</id>
        <label>EBP</label>
    </interactant>
    <organismsDiffer>false</organismsDiffer>
    <experiments>3</experiments>
</comment>
<comment type="interaction">
    <interactant intactId="EBI-4401517">
        <id>O14653</id>
    </interactant>
    <interactant intactId="EBI-18535450">
        <id>Q9GZR5</id>
        <label>ELOVL4</label>
    </interactant>
    <organismsDiffer>false</organismsDiffer>
    <experiments>3</experiments>
</comment>
<comment type="interaction">
    <interactant intactId="EBI-4401517">
        <id>O14653</id>
    </interactant>
    <interactant intactId="EBI-11037623">
        <id>Q9NYP7</id>
        <label>ELOVL5</label>
    </interactant>
    <organismsDiffer>false</organismsDiffer>
    <experiments>3</experiments>
</comment>
<comment type="interaction">
    <interactant intactId="EBI-4401517">
        <id>O14653</id>
    </interactant>
    <interactant intactId="EBI-18636064">
        <id>Q8TBP5</id>
        <label>FAM174A</label>
    </interactant>
    <organismsDiffer>false</organismsDiffer>
    <experiments>3</experiments>
</comment>
<comment type="interaction">
    <interactant intactId="EBI-4401517">
        <id>O14653</id>
    </interactant>
    <interactant intactId="EBI-18304435">
        <id>Q5JX71</id>
        <label>FAM209A</label>
    </interactant>
    <organismsDiffer>false</organismsDiffer>
    <experiments>3</experiments>
</comment>
<comment type="interaction">
    <interactant intactId="EBI-4401517">
        <id>O14653</id>
    </interactant>
    <interactant intactId="EBI-743099">
        <id>Q969F0</id>
        <label>FATE1</label>
    </interactant>
    <organismsDiffer>false</organismsDiffer>
    <experiments>3</experiments>
</comment>
<comment type="interaction">
    <interactant intactId="EBI-4401517">
        <id>O14653</id>
    </interactant>
    <interactant intactId="EBI-10181276">
        <id>Q0D2H9</id>
        <label>GOLGA8DP</label>
    </interactant>
    <organismsDiffer>false</organismsDiffer>
    <experiments>5</experiments>
</comment>
<comment type="interaction">
    <interactant intactId="EBI-4401517">
        <id>O14653</id>
    </interactant>
    <interactant intactId="EBI-10181260">
        <id>Q08AF8</id>
        <label>GOLGA8G</label>
    </interactant>
    <organismsDiffer>false</organismsDiffer>
    <experiments>5</experiments>
</comment>
<comment type="interaction">
    <interactant intactId="EBI-4401517">
        <id>O14653</id>
    </interactant>
    <interactant intactId="EBI-13345167">
        <id>Q8TDT2</id>
        <label>GPR152</label>
    </interactant>
    <organismsDiffer>false</organismsDiffer>
    <experiments>3</experiments>
</comment>
<comment type="interaction">
    <interactant intactId="EBI-4401517">
        <id>O14653</id>
    </interactant>
    <interactant intactId="EBI-18076404">
        <id>O15529</id>
        <label>GPR42</label>
    </interactant>
    <organismsDiffer>false</organismsDiffer>
    <experiments>3</experiments>
</comment>
<comment type="interaction">
    <interactant intactId="EBI-4401517">
        <id>O14653</id>
    </interactant>
    <interactant intactId="EBI-11721746">
        <id>Q8TED1</id>
        <label>GPX8</label>
    </interactant>
    <organismsDiffer>false</organismsDiffer>
    <experiments>3</experiments>
</comment>
<comment type="interaction">
    <interactant intactId="EBI-4401517">
        <id>O14653</id>
    </interactant>
    <interactant intactId="EBI-11427100">
        <id>P31937</id>
        <label>HIBADH</label>
    </interactant>
    <organismsDiffer>false</organismsDiffer>
    <experiments>3</experiments>
</comment>
<comment type="interaction">
    <interactant intactId="EBI-4401517">
        <id>O14653</id>
    </interactant>
    <interactant intactId="EBI-18053395">
        <id>Q7Z5P4</id>
        <label>HSD17B13</label>
    </interactant>
    <organismsDiffer>false</organismsDiffer>
    <experiments>3</experiments>
</comment>
<comment type="interaction">
    <interactant intactId="EBI-4401517">
        <id>O14653</id>
    </interactant>
    <interactant intactId="EBI-725665">
        <id>Q9Y5U9</id>
        <label>IER3IP1</label>
    </interactant>
    <organismsDiffer>false</organismsDiffer>
    <experiments>3</experiments>
</comment>
<comment type="interaction">
    <interactant intactId="EBI-4401517">
        <id>O14653</id>
    </interactant>
    <interactant intactId="EBI-10266796">
        <id>Q8N5M9</id>
        <label>JAGN1</label>
    </interactant>
    <organismsDiffer>false</organismsDiffer>
    <experiments>3</experiments>
</comment>
<comment type="interaction">
    <interactant intactId="EBI-4401517">
        <id>O14653</id>
    </interactant>
    <interactant intactId="EBI-749265">
        <id>Q8N6L0</id>
        <label>KASH5</label>
    </interactant>
    <organismsDiffer>false</organismsDiffer>
    <experiments>6</experiments>
</comment>
<comment type="interaction">
    <interactant intactId="EBI-4401517">
        <id>O14653</id>
    </interactant>
    <interactant intactId="EBI-17490413">
        <id>A8MZ59</id>
        <label>LEUTX</label>
    </interactant>
    <organismsDiffer>false</organismsDiffer>
    <experiments>3</experiments>
</comment>
<comment type="interaction">
    <interactant intactId="EBI-4401517">
        <id>O14653</id>
    </interactant>
    <interactant intactId="EBI-2830566">
        <id>Q9H400</id>
        <label>LIME1</label>
    </interactant>
    <organismsDiffer>false</organismsDiffer>
    <experiments>3</experiments>
</comment>
<comment type="interaction">
    <interactant intactId="EBI-4401517">
        <id>O14653</id>
    </interactant>
    <interactant intactId="EBI-14061946">
        <id>Q5T0T0</id>
        <label>MARCHF8</label>
    </interactant>
    <organismsDiffer>false</organismsDiffer>
    <experiments>3</experiments>
</comment>
<comment type="interaction">
    <interactant intactId="EBI-4401517">
        <id>O14653</id>
    </interactant>
    <interactant intactId="EBI-11956541">
        <id>Q9GZY8-5</id>
        <label>MFF</label>
    </interactant>
    <organismsDiffer>false</organismsDiffer>
    <experiments>3</experiments>
</comment>
<comment type="interaction">
    <interactant intactId="EBI-4401517">
        <id>O14653</id>
    </interactant>
    <interactant intactId="EBI-373355">
        <id>Q5SR56</id>
        <label>MFSD14B</label>
    </interactant>
    <organismsDiffer>false</organismsDiffer>
    <experiments>3</experiments>
</comment>
<comment type="interaction">
    <interactant intactId="EBI-4401517">
        <id>O14653</id>
    </interactant>
    <interactant intactId="EBI-3920969">
        <id>Q6N075</id>
        <label>MFSD5</label>
    </interactant>
    <organismsDiffer>false</organismsDiffer>
    <experiments>3</experiments>
</comment>
<comment type="interaction">
    <interactant intactId="EBI-4401517">
        <id>O14653</id>
    </interactant>
    <interactant intactId="EBI-6163737">
        <id>Q8N4V1</id>
        <label>MMGT1</label>
    </interactant>
    <organismsDiffer>false</organismsDiffer>
    <experiments>3</experiments>
</comment>
<comment type="interaction">
    <interactant intactId="EBI-4401517">
        <id>O14653</id>
    </interactant>
    <interactant intactId="EBI-448369">
        <id>Q96FA3</id>
        <label>PELI1</label>
    </interactant>
    <organismsDiffer>false</organismsDiffer>
    <experiments>3</experiments>
</comment>
<comment type="interaction">
    <interactant intactId="EBI-4401517">
        <id>O14653</id>
    </interactant>
    <interactant intactId="EBI-10192441">
        <id>Q86VR2</id>
        <label>RETREG3</label>
    </interactant>
    <organismsDiffer>false</organismsDiffer>
    <experiments>3</experiments>
</comment>
<comment type="interaction">
    <interactant intactId="EBI-4401517">
        <id>O14653</id>
    </interactant>
    <interactant intactId="EBI-12375429">
        <id>Q7Z5B4-5</id>
        <label>RIC3</label>
    </interactant>
    <organismsDiffer>false</organismsDiffer>
    <experiments>3</experiments>
</comment>
<comment type="interaction">
    <interactant intactId="EBI-4401517">
        <id>O14653</id>
    </interactant>
    <interactant intactId="EBI-2466594">
        <id>Q6ZMZ0</id>
        <label>RNF19B</label>
    </interactant>
    <organismsDiffer>false</organismsDiffer>
    <experiments>3</experiments>
</comment>
<comment type="interaction">
    <interactant intactId="EBI-4401517">
        <id>O14653</id>
    </interactant>
    <interactant intactId="EBI-3923031">
        <id>Q14973</id>
        <label>SLC10A1</label>
    </interactant>
    <organismsDiffer>false</organismsDiffer>
    <experiments>3</experiments>
</comment>
<comment type="interaction">
    <interactant intactId="EBI-4401517">
        <id>O14653</id>
    </interactant>
    <interactant intactId="EBI-18159983">
        <id>Q3KNW5</id>
        <label>SLC10A6</label>
    </interactant>
    <organismsDiffer>false</organismsDiffer>
    <experiments>3</experiments>
</comment>
<comment type="interaction">
    <interactant intactId="EBI-4401517">
        <id>O14653</id>
    </interactant>
    <interactant intactId="EBI-10819434">
        <id>Q9NPE6</id>
        <label>SPAG4</label>
    </interactant>
    <organismsDiffer>false</organismsDiffer>
    <experiments>3</experiments>
</comment>
<comment type="interaction">
    <interactant intactId="EBI-4401517">
        <id>O14653</id>
    </interactant>
    <interactant intactId="EBI-712466">
        <id>Q16623</id>
        <label>STX1A</label>
    </interactant>
    <organismsDiffer>false</organismsDiffer>
    <experiments>6</experiments>
</comment>
<comment type="interaction">
    <interactant intactId="EBI-4401517">
        <id>O14653</id>
    </interactant>
    <interactant intactId="EBI-744942">
        <id>Q12846</id>
        <label>STX4</label>
    </interactant>
    <organismsDiffer>false</organismsDiffer>
    <experiments>6</experiments>
</comment>
<comment type="interaction">
    <interactant intactId="EBI-4401517">
        <id>O14653</id>
    </interactant>
    <interactant intactId="EBI-714206">
        <id>Q13190</id>
        <label>STX5</label>
    </interactant>
    <organismsDiffer>false</organismsDiffer>
    <experiments>5</experiments>
</comment>
<comment type="interaction">
    <interactant intactId="EBI-4401517">
        <id>O14653</id>
    </interactant>
    <interactant intactId="EBI-2695795">
        <id>O43752</id>
        <label>STX6</label>
    </interactant>
    <organismsDiffer>false</organismsDiffer>
    <experiments>5</experiments>
</comment>
<comment type="interaction">
    <interactant intactId="EBI-4401517">
        <id>O14653</id>
    </interactant>
    <interactant intactId="EBI-12947623">
        <id>Q96MV1</id>
        <label>TLCD4</label>
    </interactant>
    <organismsDiffer>false</organismsDiffer>
    <experiments>3</experiments>
</comment>
<comment type="interaction">
    <interactant intactId="EBI-4401517">
        <id>O14653</id>
    </interactant>
    <interactant intactId="EBI-6448756">
        <id>Q96DZ7</id>
        <label>TM4SF19</label>
    </interactant>
    <organismsDiffer>false</organismsDiffer>
    <experiments>3</experiments>
</comment>
<comment type="interaction">
    <interactant intactId="EBI-4401517">
        <id>O14653</id>
    </interactant>
    <interactant intactId="EBI-12821895">
        <id>Q8N6Q1</id>
        <label>TMCO5A</label>
    </interactant>
    <organismsDiffer>false</organismsDiffer>
    <experiments>3</experiments>
</comment>
<comment type="interaction">
    <interactant intactId="EBI-4401517">
        <id>O14653</id>
    </interactant>
    <interactant intactId="EBI-3915978">
        <id>Q96A25</id>
        <label>TMEM106A</label>
    </interactant>
    <organismsDiffer>false</organismsDiffer>
    <experiments>3</experiments>
</comment>
<comment type="interaction">
    <interactant intactId="EBI-4401517">
        <id>O14653</id>
    </interactant>
    <interactant intactId="EBI-2821497">
        <id>Q9BVX2</id>
        <label>TMEM106C</label>
    </interactant>
    <organismsDiffer>false</organismsDiffer>
    <experiments>3</experiments>
</comment>
<comment type="interaction">
    <interactant intactId="EBI-4401517">
        <id>O14653</id>
    </interactant>
    <interactant intactId="EBI-6269551">
        <id>Q6UW68</id>
        <label>TMEM205</label>
    </interactant>
    <organismsDiffer>false</organismsDiffer>
    <experiments>3</experiments>
</comment>
<comment type="interaction">
    <interactant intactId="EBI-4401517">
        <id>O14653</id>
    </interactant>
    <interactant intactId="EBI-11722971">
        <id>Q53FP2</id>
        <label>TMEM35A</label>
    </interactant>
    <organismsDiffer>false</organismsDiffer>
    <experiments>3</experiments>
</comment>
<comment type="subcellular location">
    <subcellularLocation>
        <location evidence="4">Golgi apparatus</location>
        <location evidence="4">cis-Golgi network membrane</location>
        <topology evidence="2">Single-pass type IV membrane protein</topology>
    </subcellularLocation>
    <subcellularLocation>
        <location evidence="10">Golgi apparatus membrane</location>
    </subcellularLocation>
    <subcellularLocation>
        <location evidence="1">Endoplasmic reticulum membrane</location>
    </subcellularLocation>
    <text evidence="1">Concentrated most in the intermediate compartment/cis-Golgi network and the cis-Golgi cisternae 1 and 2. Greatly reduced in concentration at the trans end of the Golgi apparatus.</text>
</comment>
<comment type="alternative products">
    <event type="alternative splicing"/>
    <isoform>
        <id>O14653-1</id>
        <name>A</name>
        <sequence type="displayed"/>
    </isoform>
    <isoform>
        <id>O14653-2</id>
        <name>B</name>
        <sequence type="described" ref="VSP_001829"/>
    </isoform>
    <isoform>
        <id>O14653-3</id>
        <name>3</name>
        <sequence type="described" ref="VSP_043200"/>
    </isoform>
</comment>
<comment type="disease" evidence="4 5">
    <disease id="DI-03161">
        <name>Epilepsy, progressive myoclonic 6</name>
        <acronym>EPM6</acronym>
        <description>A form of progressive myoclonic epilepsy, a clinically and genetically heterogeneous group of disorders defined by the combination of action and reflex myoclonus, other types of epileptic seizures, and progressive neurodegeneration and neurocognitive impairment. EPM6 is an autosomal recessive form characterized by onset of ataxia in the first years of life, followed by action myoclonus and seizures later in childhood, and loss of independent ambulation in the second decade. Cognition is not usually affected, although mild memory difficulties may occur in the third decade.</description>
        <dbReference type="MIM" id="614018"/>
    </disease>
    <text>The disease is caused by variants affecting the gene represented in this entry.</text>
</comment>
<comment type="disease" evidence="6 7 8">
    <disease id="DI-06571">
        <name>Muscular dystrophy, congenital, with or without seizures</name>
        <acronym>MYOS</acronym>
        <description>An autosomal recessive muscular dystrophy characterized by hypotonia and elevated serum creatine kinase levels apparent from birth. Patients have progressive muscle weakness, areflexia, and may develop seizures in early childhood or have abnormal epileptiform findings on electroencephalogram studies.</description>
        <dbReference type="MIM" id="620166"/>
    </disease>
    <text>The disease is caused by variants affecting the gene represented in this entry.</text>
</comment>
<comment type="similarity">
    <text evidence="15">Belongs to the GOSR2 family.</text>
</comment>
<gene>
    <name type="primary">GOSR2</name>
    <name type="synonym">GS27</name>
</gene>
<feature type="chain" id="PRO_0000212549" description="Golgi SNAP receptor complex member 2">
    <location>
        <begin position="1"/>
        <end position="212"/>
    </location>
</feature>
<feature type="topological domain" description="Cytoplasmic" evidence="2">
    <location>
        <begin position="1"/>
        <end position="190"/>
    </location>
</feature>
<feature type="transmembrane region" description="Helical; Anchor for type IV membrane protein" evidence="2">
    <location>
        <begin position="191"/>
        <end position="211"/>
    </location>
</feature>
<feature type="topological domain" description="Vesicular" evidence="2">
    <location>
        <position position="212"/>
    </location>
</feature>
<feature type="coiled-coil region" evidence="2">
    <location>
        <begin position="61"/>
        <end position="107"/>
    </location>
</feature>
<feature type="short sequence motif" description="IxM motif; signal for cargo packaging into COPII-coated vesicles" evidence="3">
    <location>
        <begin position="118"/>
        <end position="120"/>
    </location>
</feature>
<feature type="modified residue" description="N-acetylmethionine" evidence="11">
    <location>
        <position position="1"/>
    </location>
</feature>
<feature type="splice variant" id="VSP_043200" description="In isoform 3." evidence="12 13">
    <original>GTQKKILDIANMLGLSNTVMRLIEKRAFQDKYFMIGGMLLTCVVMFLVVQYLT</original>
    <variation>VGSLLGDREKASCFSLIQQFSNCVYILITCPQIVIF</variation>
    <location>
        <begin position="160"/>
        <end position="212"/>
    </location>
</feature>
<feature type="splice variant" id="VSP_001829" description="In isoform B." evidence="14">
    <original>GMLLTCVVMFLVVQYLT</original>
    <variation>TQGSCQTAHFGGRSAGSS</variation>
    <location>
        <begin position="196"/>
        <end position="212"/>
    </location>
</feature>
<feature type="sequence variant" id="VAR_087912" description="In MYOS." evidence="7">
    <location>
        <begin position="28"/>
        <end position="212"/>
    </location>
</feature>
<feature type="sequence variant" id="VAR_024471" description="In dbSNP:rs197922.">
    <original>R</original>
    <variation>K</variation>
    <location>
        <position position="67"/>
    </location>
</feature>
<feature type="sequence variant" id="VAR_087913" description="In MYOS." evidence="8">
    <location>
        <begin position="107"/>
        <end position="212"/>
    </location>
</feature>
<feature type="sequence variant" id="VAR_065833" description="In EPM6 and MYOS; no effect on protein stability; loss of localization to the cis-Golgi network membrane; loss of function; unable to rescue the yeast strain lacking the ortholog Bos1; dbSNP:rs387906881." evidence="4 5 6 7">
    <original>G</original>
    <variation>W</variation>
    <location>
        <position position="144"/>
    </location>
</feature>
<feature type="mutagenesis site" description="Loss of interaction with SEC24C." evidence="3">
    <original>I</original>
    <variation>A</variation>
    <location>
        <position position="118"/>
    </location>
</feature>
<feature type="mutagenesis site" description="Loss of interaction with SEC24C." evidence="3">
    <original>M</original>
    <variation>A</variation>
    <location>
        <position position="120"/>
    </location>
</feature>
<feature type="sequence conflict" description="In Ref. 1; AAB82651." evidence="15" ref="1">
    <original>S</original>
    <variation>C</variation>
    <location>
        <position position="106"/>
    </location>
</feature>
<feature type="sequence conflict" description="In Ref. 1; AAB82651." evidence="15" ref="1">
    <original>D</original>
    <variation>G</variation>
    <location>
        <position position="113"/>
    </location>
</feature>
<feature type="sequence conflict" description="In Ref. 1; AAB82651." evidence="15" ref="1">
    <original>L</original>
    <variation>P</variation>
    <location>
        <position position="166"/>
    </location>
</feature>
<feature type="strand" evidence="17">
    <location>
        <begin position="117"/>
        <end position="119"/>
    </location>
</feature>